<accession>B2FNX6</accession>
<keyword id="KW-1003">Cell membrane</keyword>
<keyword id="KW-0472">Membrane</keyword>
<keyword id="KW-0520">NAD</keyword>
<keyword id="KW-0874">Quinone</keyword>
<keyword id="KW-1185">Reference proteome</keyword>
<keyword id="KW-1278">Translocase</keyword>
<keyword id="KW-0813">Transport</keyword>
<keyword id="KW-0830">Ubiquinone</keyword>
<sequence length="435" mass="49523">MSHVHQAGEAFASNAAESRQEIRNYTMNFGPQHPAAHGVLRLILEMDGETIMRADPHVGLLHRGTEKLAESKPFNQSIGYMDRLDYVSMMCNEHAYVRAIETLMGIEAPERAQYIRTMYDEITRILNHLMWLGSNALDLGAMAVMLYAFREREELMDCYEAVSGARMHAAYYRPGGVYRDLPDHMPKYKESRWHKGKALKQLNASREGSLLDFLENFTVEFPKRIDEYETLLTDNRIWKQRTVGIGVVTPELAHQWGMTGVMLRGSGVAWDLRKKRPYAKYDAVDFDIPLGKEGDCYDRYLVRVAEMRESNRIIKQCVAWLKANPGPVMVKNFKVAPPRREDMKDDMEALIHHFKLFSEGYCVPAGETYSAVEAPKGEFGCYLVSDGANKPFRVHLRAPGFAHLSSIDSIVRGHMLADVVAMIGTYDLVFGEVDR</sequence>
<feature type="chain" id="PRO_0000371926" description="NADH-quinone oxidoreductase subunit D">
    <location>
        <begin position="1"/>
        <end position="435"/>
    </location>
</feature>
<comment type="function">
    <text evidence="1">NDH-1 shuttles electrons from NADH, via FMN and iron-sulfur (Fe-S) centers, to quinones in the respiratory chain. The immediate electron acceptor for the enzyme in this species is believed to be ubiquinone. Couples the redox reaction to proton translocation (for every two electrons transferred, four hydrogen ions are translocated across the cytoplasmic membrane), and thus conserves the redox energy in a proton gradient.</text>
</comment>
<comment type="catalytic activity">
    <reaction evidence="1">
        <text>a quinone + NADH + 5 H(+)(in) = a quinol + NAD(+) + 4 H(+)(out)</text>
        <dbReference type="Rhea" id="RHEA:57888"/>
        <dbReference type="ChEBI" id="CHEBI:15378"/>
        <dbReference type="ChEBI" id="CHEBI:24646"/>
        <dbReference type="ChEBI" id="CHEBI:57540"/>
        <dbReference type="ChEBI" id="CHEBI:57945"/>
        <dbReference type="ChEBI" id="CHEBI:132124"/>
    </reaction>
</comment>
<comment type="subunit">
    <text evidence="1">NDH-1 is composed of 14 different subunits. Subunits NuoB, C, D, E, F, and G constitute the peripheral sector of the complex.</text>
</comment>
<comment type="subcellular location">
    <subcellularLocation>
        <location evidence="1">Cell membrane</location>
        <topology evidence="1">Peripheral membrane protein</topology>
        <orientation evidence="1">Cytoplasmic side</orientation>
    </subcellularLocation>
</comment>
<comment type="similarity">
    <text evidence="1">Belongs to the complex I 49 kDa subunit family.</text>
</comment>
<name>NUOD_STRMK</name>
<protein>
    <recommendedName>
        <fullName evidence="1">NADH-quinone oxidoreductase subunit D</fullName>
        <ecNumber evidence="1">7.1.1.-</ecNumber>
    </recommendedName>
    <alternativeName>
        <fullName evidence="1">NADH dehydrogenase I subunit D</fullName>
    </alternativeName>
    <alternativeName>
        <fullName evidence="1">NDH-1 subunit D</fullName>
    </alternativeName>
</protein>
<evidence type="ECO:0000255" key="1">
    <source>
        <dbReference type="HAMAP-Rule" id="MF_01358"/>
    </source>
</evidence>
<gene>
    <name evidence="1" type="primary">nuoD</name>
    <name type="ordered locus">Smlt3402</name>
</gene>
<proteinExistence type="inferred from homology"/>
<dbReference type="EC" id="7.1.1.-" evidence="1"/>
<dbReference type="EMBL" id="AM743169">
    <property type="protein sequence ID" value="CAQ46830.1"/>
    <property type="molecule type" value="Genomic_DNA"/>
</dbReference>
<dbReference type="RefSeq" id="WP_005410461.1">
    <property type="nucleotide sequence ID" value="NC_010943.1"/>
</dbReference>
<dbReference type="SMR" id="B2FNX6"/>
<dbReference type="EnsemblBacteria" id="CAQ46830">
    <property type="protein sequence ID" value="CAQ46830"/>
    <property type="gene ID" value="Smlt3402"/>
</dbReference>
<dbReference type="KEGG" id="sml:Smlt3402"/>
<dbReference type="eggNOG" id="COG0649">
    <property type="taxonomic scope" value="Bacteria"/>
</dbReference>
<dbReference type="HOGENOM" id="CLU_015134_1_1_6"/>
<dbReference type="Proteomes" id="UP000008840">
    <property type="component" value="Chromosome"/>
</dbReference>
<dbReference type="GO" id="GO:0005886">
    <property type="term" value="C:plasma membrane"/>
    <property type="evidence" value="ECO:0007669"/>
    <property type="project" value="UniProtKB-SubCell"/>
</dbReference>
<dbReference type="GO" id="GO:0051287">
    <property type="term" value="F:NAD binding"/>
    <property type="evidence" value="ECO:0007669"/>
    <property type="project" value="InterPro"/>
</dbReference>
<dbReference type="GO" id="GO:0050136">
    <property type="term" value="F:NADH:ubiquinone reductase (non-electrogenic) activity"/>
    <property type="evidence" value="ECO:0007669"/>
    <property type="project" value="UniProtKB-UniRule"/>
</dbReference>
<dbReference type="GO" id="GO:0048038">
    <property type="term" value="F:quinone binding"/>
    <property type="evidence" value="ECO:0007669"/>
    <property type="project" value="UniProtKB-KW"/>
</dbReference>
<dbReference type="FunFam" id="1.10.645.10:FF:000005">
    <property type="entry name" value="NADH-quinone oxidoreductase subunit D"/>
    <property type="match status" value="1"/>
</dbReference>
<dbReference type="Gene3D" id="1.10.645.10">
    <property type="entry name" value="Cytochrome-c3 Hydrogenase, chain B"/>
    <property type="match status" value="1"/>
</dbReference>
<dbReference type="HAMAP" id="MF_01358">
    <property type="entry name" value="NDH1_NuoD"/>
    <property type="match status" value="1"/>
</dbReference>
<dbReference type="InterPro" id="IPR001135">
    <property type="entry name" value="NADH_Q_OxRdtase_suD"/>
</dbReference>
<dbReference type="InterPro" id="IPR014029">
    <property type="entry name" value="NADH_UbQ_OxRdtase_49kDa_CS"/>
</dbReference>
<dbReference type="InterPro" id="IPR022885">
    <property type="entry name" value="NDH1_su_D/H"/>
</dbReference>
<dbReference type="InterPro" id="IPR029014">
    <property type="entry name" value="NiFe-Hase_large"/>
</dbReference>
<dbReference type="NCBIfam" id="TIGR01962">
    <property type="entry name" value="NuoD"/>
    <property type="match status" value="1"/>
</dbReference>
<dbReference type="NCBIfam" id="NF004739">
    <property type="entry name" value="PRK06075.1"/>
    <property type="match status" value="1"/>
</dbReference>
<dbReference type="PANTHER" id="PTHR11993:SF10">
    <property type="entry name" value="NADH DEHYDROGENASE [UBIQUINONE] IRON-SULFUR PROTEIN 2, MITOCHONDRIAL"/>
    <property type="match status" value="1"/>
</dbReference>
<dbReference type="PANTHER" id="PTHR11993">
    <property type="entry name" value="NADH-UBIQUINONE OXIDOREDUCTASE 49 KDA SUBUNIT"/>
    <property type="match status" value="1"/>
</dbReference>
<dbReference type="Pfam" id="PF00346">
    <property type="entry name" value="Complex1_49kDa"/>
    <property type="match status" value="1"/>
</dbReference>
<dbReference type="SUPFAM" id="SSF56762">
    <property type="entry name" value="HydB/Nqo4-like"/>
    <property type="match status" value="1"/>
</dbReference>
<dbReference type="PROSITE" id="PS00535">
    <property type="entry name" value="COMPLEX1_49K"/>
    <property type="match status" value="1"/>
</dbReference>
<organism>
    <name type="scientific">Stenotrophomonas maltophilia (strain K279a)</name>
    <dbReference type="NCBI Taxonomy" id="522373"/>
    <lineage>
        <taxon>Bacteria</taxon>
        <taxon>Pseudomonadati</taxon>
        <taxon>Pseudomonadota</taxon>
        <taxon>Gammaproteobacteria</taxon>
        <taxon>Lysobacterales</taxon>
        <taxon>Lysobacteraceae</taxon>
        <taxon>Stenotrophomonas</taxon>
        <taxon>Stenotrophomonas maltophilia group</taxon>
    </lineage>
</organism>
<reference key="1">
    <citation type="journal article" date="2008" name="Genome Biol.">
        <title>The complete genome, comparative and functional analysis of Stenotrophomonas maltophilia reveals an organism heavily shielded by drug resistance determinants.</title>
        <authorList>
            <person name="Crossman L.C."/>
            <person name="Gould V.C."/>
            <person name="Dow J.M."/>
            <person name="Vernikos G.S."/>
            <person name="Okazaki A."/>
            <person name="Sebaihia M."/>
            <person name="Saunders D."/>
            <person name="Arrowsmith C."/>
            <person name="Carver T."/>
            <person name="Peters N."/>
            <person name="Adlem E."/>
            <person name="Kerhornou A."/>
            <person name="Lord A."/>
            <person name="Murphy L."/>
            <person name="Seeger K."/>
            <person name="Squares R."/>
            <person name="Rutter S."/>
            <person name="Quail M.A."/>
            <person name="Rajandream M.A."/>
            <person name="Harris D."/>
            <person name="Churcher C."/>
            <person name="Bentley S.D."/>
            <person name="Parkhill J."/>
            <person name="Thomson N.R."/>
            <person name="Avison M.B."/>
        </authorList>
    </citation>
    <scope>NUCLEOTIDE SEQUENCE [LARGE SCALE GENOMIC DNA]</scope>
    <source>
        <strain>K279a</strain>
    </source>
</reference>